<organism>
    <name type="scientific">Synechocystis sp. (strain ATCC 27184 / PCC 6803 / Kazusa)</name>
    <dbReference type="NCBI Taxonomy" id="1111708"/>
    <lineage>
        <taxon>Bacteria</taxon>
        <taxon>Bacillati</taxon>
        <taxon>Cyanobacteriota</taxon>
        <taxon>Cyanophyceae</taxon>
        <taxon>Synechococcales</taxon>
        <taxon>Merismopediaceae</taxon>
        <taxon>Synechocystis</taxon>
    </lineage>
</organism>
<name>Y2009_SYNY3</name>
<protein>
    <recommendedName>
        <fullName>Thylakoid membrane protein ssl2009</fullName>
    </recommendedName>
</protein>
<keyword id="KW-0175">Coiled coil</keyword>
<keyword id="KW-0472">Membrane</keyword>
<keyword id="KW-1185">Reference proteome</keyword>
<keyword id="KW-0793">Thylakoid</keyword>
<keyword id="KW-0812">Transmembrane</keyword>
<keyword id="KW-1133">Transmembrane helix</keyword>
<reference key="1">
    <citation type="journal article" date="1996" name="DNA Res.">
        <title>Sequence analysis of the genome of the unicellular cyanobacterium Synechocystis sp. strain PCC6803. II. Sequence determination of the entire genome and assignment of potential protein-coding regions.</title>
        <authorList>
            <person name="Kaneko T."/>
            <person name="Sato S."/>
            <person name="Kotani H."/>
            <person name="Tanaka A."/>
            <person name="Asamizu E."/>
            <person name="Nakamura Y."/>
            <person name="Miyajima N."/>
            <person name="Hirosawa M."/>
            <person name="Sugiura M."/>
            <person name="Sasamoto S."/>
            <person name="Kimura T."/>
            <person name="Hosouchi T."/>
            <person name="Matsuno A."/>
            <person name="Muraki A."/>
            <person name="Nakazaki N."/>
            <person name="Naruo K."/>
            <person name="Okumura S."/>
            <person name="Shimpo S."/>
            <person name="Takeuchi C."/>
            <person name="Wada T."/>
            <person name="Watanabe A."/>
            <person name="Yamada M."/>
            <person name="Yasuda M."/>
            <person name="Tabata S."/>
        </authorList>
    </citation>
    <scope>NUCLEOTIDE SEQUENCE [LARGE SCALE GENOMIC DNA]</scope>
    <source>
        <strain>ATCC 27184 / PCC 6803 / Kazusa</strain>
    </source>
</reference>
<reference key="2">
    <citation type="journal article" date="2005" name="Proteomics">
        <title>Proteomic studies of the thylakoid membrane of Synechocystis sp. PCC 6803.</title>
        <authorList>
            <person name="Srivastava R."/>
            <person name="Pisareva T."/>
            <person name="Norling B."/>
        </authorList>
    </citation>
    <scope>SUBCELLULAR LOCATION IN THYLAKOID</scope>
</reference>
<sequence length="99" mass="10805">MAQKDNFAGGFLLGTVIGGVVGGILGSVLANRAATQSPDREKLDTEGVGNLDSEENIELARRRLEDKIAQLNLVIDDVRDQLGHVNELNNIKEVQEEHR</sequence>
<gene>
    <name type="ordered locus">ssl2009</name>
</gene>
<accession>P72752</accession>
<dbReference type="EMBL" id="BA000022">
    <property type="protein sequence ID" value="BAA16767.1"/>
    <property type="molecule type" value="Genomic_DNA"/>
</dbReference>
<dbReference type="PIR" id="S74615">
    <property type="entry name" value="S74615"/>
</dbReference>
<dbReference type="STRING" id="1148.gene:10497623"/>
<dbReference type="PaxDb" id="1148-1651840"/>
<dbReference type="EnsemblBacteria" id="BAA16767">
    <property type="protein sequence ID" value="BAA16767"/>
    <property type="gene ID" value="BAA16767"/>
</dbReference>
<dbReference type="KEGG" id="syn:ssl2009"/>
<dbReference type="eggNOG" id="ENOG5032ZAD">
    <property type="taxonomic scope" value="Bacteria"/>
</dbReference>
<dbReference type="InParanoid" id="P72752"/>
<dbReference type="Proteomes" id="UP000001425">
    <property type="component" value="Chromosome"/>
</dbReference>
<dbReference type="GO" id="GO:0031676">
    <property type="term" value="C:plasma membrane-derived thylakoid membrane"/>
    <property type="evidence" value="ECO:0007669"/>
    <property type="project" value="UniProtKB-SubCell"/>
</dbReference>
<dbReference type="InterPro" id="IPR040377">
    <property type="entry name" value="Ssl2009-like"/>
</dbReference>
<dbReference type="PANTHER" id="PTHR34048">
    <property type="entry name" value="LOW-DENSITY RECEPTOR-LIKE PROTEIN"/>
    <property type="match status" value="1"/>
</dbReference>
<dbReference type="PANTHER" id="PTHR34048:SF3">
    <property type="entry name" value="LOW-DENSITY RECEPTOR-LIKE PROTEIN"/>
    <property type="match status" value="1"/>
</dbReference>
<evidence type="ECO:0000255" key="1"/>
<evidence type="ECO:0000269" key="2">
    <source>
    </source>
</evidence>
<feature type="chain" id="PRO_0000352744" description="Thylakoid membrane protein ssl2009">
    <location>
        <begin position="1"/>
        <end position="99"/>
    </location>
</feature>
<feature type="transmembrane region" description="Helical" evidence="1">
    <location>
        <begin position="10"/>
        <end position="30"/>
    </location>
</feature>
<feature type="coiled-coil region" evidence="1">
    <location>
        <begin position="50"/>
        <end position="84"/>
    </location>
</feature>
<comment type="subcellular location">
    <subcellularLocation>
        <location evidence="2">Cellular thylakoid membrane</location>
        <topology evidence="2">Single-pass membrane protein</topology>
    </subcellularLocation>
</comment>
<proteinExistence type="predicted"/>